<evidence type="ECO:0000250" key="1"/>
<evidence type="ECO:0000255" key="2"/>
<evidence type="ECO:0000255" key="3">
    <source>
        <dbReference type="PROSITE-ProRule" id="PRU10095"/>
    </source>
</evidence>
<evidence type="ECO:0000269" key="4">
    <source>
    </source>
</evidence>
<evidence type="ECO:0000305" key="5"/>
<gene>
    <name type="primary">MEP5</name>
</gene>
<name>MEP5_TRIRU</name>
<dbReference type="EC" id="3.4.24.-"/>
<dbReference type="EMBL" id="AF407190">
    <property type="protein sequence ID" value="AAN03641.1"/>
    <property type="molecule type" value="mRNA"/>
</dbReference>
<dbReference type="EMBL" id="AF407189">
    <property type="protein sequence ID" value="AAN03640.1"/>
    <property type="molecule type" value="Genomic_DNA"/>
</dbReference>
<dbReference type="SMR" id="Q8NIH1"/>
<dbReference type="MEROPS" id="M36.001"/>
<dbReference type="GlyCosmos" id="Q8NIH1">
    <property type="glycosylation" value="3 sites, No reported glycans"/>
</dbReference>
<dbReference type="VEuPathDB" id="FungiDB:TERG_02213"/>
<dbReference type="GO" id="GO:0005576">
    <property type="term" value="C:extracellular region"/>
    <property type="evidence" value="ECO:0007669"/>
    <property type="project" value="UniProtKB-SubCell"/>
</dbReference>
<dbReference type="GO" id="GO:0004222">
    <property type="term" value="F:metalloendopeptidase activity"/>
    <property type="evidence" value="ECO:0007669"/>
    <property type="project" value="InterPro"/>
</dbReference>
<dbReference type="GO" id="GO:0008270">
    <property type="term" value="F:zinc ion binding"/>
    <property type="evidence" value="ECO:0007669"/>
    <property type="project" value="InterPro"/>
</dbReference>
<dbReference type="GO" id="GO:0006508">
    <property type="term" value="P:proteolysis"/>
    <property type="evidence" value="ECO:0007669"/>
    <property type="project" value="UniProtKB-KW"/>
</dbReference>
<dbReference type="CDD" id="cd09596">
    <property type="entry name" value="M36"/>
    <property type="match status" value="1"/>
</dbReference>
<dbReference type="Gene3D" id="3.10.170.10">
    <property type="match status" value="1"/>
</dbReference>
<dbReference type="Gene3D" id="1.10.390.10">
    <property type="entry name" value="Neutral Protease Domain 2"/>
    <property type="match status" value="1"/>
</dbReference>
<dbReference type="InterPro" id="IPR011096">
    <property type="entry name" value="FTP_domain"/>
</dbReference>
<dbReference type="InterPro" id="IPR050371">
    <property type="entry name" value="Fungal_virulence_M36"/>
</dbReference>
<dbReference type="InterPro" id="IPR001842">
    <property type="entry name" value="Peptidase_M36"/>
</dbReference>
<dbReference type="InterPro" id="IPR027268">
    <property type="entry name" value="Peptidase_M4/M1_CTD_sf"/>
</dbReference>
<dbReference type="PANTHER" id="PTHR33478">
    <property type="entry name" value="EXTRACELLULAR METALLOPROTEINASE MEP"/>
    <property type="match status" value="1"/>
</dbReference>
<dbReference type="PANTHER" id="PTHR33478:SF1">
    <property type="entry name" value="EXTRACELLULAR METALLOPROTEINASE MEP"/>
    <property type="match status" value="1"/>
</dbReference>
<dbReference type="Pfam" id="PF07504">
    <property type="entry name" value="FTP"/>
    <property type="match status" value="1"/>
</dbReference>
<dbReference type="Pfam" id="PF02128">
    <property type="entry name" value="Peptidase_M36"/>
    <property type="match status" value="1"/>
</dbReference>
<dbReference type="PRINTS" id="PR00999">
    <property type="entry name" value="FUNGALYSIN"/>
</dbReference>
<dbReference type="SUPFAM" id="SSF55486">
    <property type="entry name" value="Metalloproteases ('zincins'), catalytic domain"/>
    <property type="match status" value="1"/>
</dbReference>
<dbReference type="PROSITE" id="PS00142">
    <property type="entry name" value="ZINC_PROTEASE"/>
    <property type="match status" value="1"/>
</dbReference>
<keyword id="KW-0325">Glycoprotein</keyword>
<keyword id="KW-0378">Hydrolase</keyword>
<keyword id="KW-0479">Metal-binding</keyword>
<keyword id="KW-0482">Metalloprotease</keyword>
<keyword id="KW-0645">Protease</keyword>
<keyword id="KW-0964">Secreted</keyword>
<keyword id="KW-0732">Signal</keyword>
<keyword id="KW-0843">Virulence</keyword>
<keyword id="KW-0862">Zinc</keyword>
<keyword id="KW-0865">Zymogen</keyword>
<sequence length="633" mass="69779">MHGLLLAAAGLLSLPLHVVAHPQPSTSLAGRGVDLDAYRMADRSSYMSSDDMKLKQPAIASLSGGNYVDTATEVVKRMMPGMTFRMADDHYVGESGISHLYFRQTMHGMDIDNADFNVNIGKDGKVLSFGHSFYTGPAPDRAPVEKRDFSGPMRAFHGACKALNLPINADKATIQTMNEHEVMFVGTSGAMSDPQGKLCYMAKEDGTLALTWRVETDMGDNWLLSYVDAKETDKVHNVVDYVSHATYQVYRWPIPDPTEGKREIVENPWNLKTSPFTWISDGKTNYTTTRGNNAIAQANFDGGEDYLNNYRPNSKNLKFEYPYAPNMSPPKSYIDASVTQLFYSANIVHDLYYMLGFTEKAGNFQVNNHGQGGKGNDFVILNAQDGSGTNNANFATPPDGKPGRMRVYIWTKAKPARDSSFEAGTVIHEYTHGLSNRLCGGPANSGCLNGMESGGMGEGWGDFFATAIRLKPNDNRNANYVHGEWVNNSPKGNRLYPYSTNLQTNPLVYTSCNKYNEVHAIGTVWCSILYEVLWNLIDKHGKNDGPTPVFENGVPNDGKYLAMKLVLDGMAIQPCKPTFVQARDAIIDADMNLTKGSNKCELWKAFAKRGLGVGAKYDPKNRTGSKAVPKECQ</sequence>
<reference key="1">
    <citation type="journal article" date="2002" name="Int. J. Med. Microbiol.">
        <title>Secreted proteases from pathogenic fungi.</title>
        <authorList>
            <person name="Monod M."/>
            <person name="Capoccia S."/>
            <person name="Lechenne B."/>
            <person name="Zaugg C."/>
            <person name="Holdom M."/>
            <person name="Jousson O."/>
        </authorList>
    </citation>
    <scope>NUCLEOTIDE SEQUENCE [GENOMIC DNA / MRNA]</scope>
</reference>
<reference key="2">
    <citation type="journal article" date="2004" name="Microbiology">
        <title>Multiplication of an ancestral gene encoding secreted fungalysin preceded species differentiation in the dermatophytes Trichophyton and Microsporum.</title>
        <authorList>
            <person name="Jousson O."/>
            <person name="Lechenne B."/>
            <person name="Bontems O."/>
            <person name="Capoccia S."/>
            <person name="Mignon B."/>
            <person name="Barblan J."/>
            <person name="Quadroni M."/>
            <person name="Monod M."/>
        </authorList>
    </citation>
    <scope>NUCLEOTIDE SEQUENCE [GENOMIC DNA]</scope>
    <scope>IDENTIFICATION BY MASS SPECTROMETRY</scope>
    <scope>SUBCELLULAR LOCATION</scope>
</reference>
<feature type="signal peptide" evidence="2">
    <location>
        <begin position="1"/>
        <end position="21"/>
    </location>
</feature>
<feature type="propeptide" id="PRO_0000380878" evidence="1">
    <location>
        <begin position="22"/>
        <end position="245"/>
    </location>
</feature>
<feature type="chain" id="PRO_0000380879" description="Extracellular metalloproteinase 5">
    <location>
        <begin position="246"/>
        <end position="633"/>
    </location>
</feature>
<feature type="active site" evidence="3">
    <location>
        <position position="429"/>
    </location>
</feature>
<feature type="binding site" evidence="3">
    <location>
        <position position="428"/>
    </location>
    <ligand>
        <name>Zn(2+)</name>
        <dbReference type="ChEBI" id="CHEBI:29105"/>
        <note>catalytic</note>
    </ligand>
</feature>
<feature type="binding site" evidence="3">
    <location>
        <position position="432"/>
    </location>
    <ligand>
        <name>Zn(2+)</name>
        <dbReference type="ChEBI" id="CHEBI:29105"/>
        <note>catalytic</note>
    </ligand>
</feature>
<feature type="glycosylation site" description="N-linked (GlcNAc...) asparagine" evidence="2">
    <location>
        <position position="285"/>
    </location>
</feature>
<feature type="glycosylation site" description="N-linked (GlcNAc...) asparagine" evidence="2">
    <location>
        <position position="592"/>
    </location>
</feature>
<feature type="glycosylation site" description="N-linked (GlcNAc...) asparagine" evidence="2">
    <location>
        <position position="621"/>
    </location>
</feature>
<comment type="function">
    <text evidence="1">Secreted metalloproteinase probably acting as a virulence factor.</text>
</comment>
<comment type="cofactor">
    <cofactor evidence="1">
        <name>Zn(2+)</name>
        <dbReference type="ChEBI" id="CHEBI:29105"/>
    </cofactor>
    <text evidence="1">Binds 1 zinc ion per subunit.</text>
</comment>
<comment type="subcellular location">
    <subcellularLocation>
        <location evidence="4">Secreted</location>
    </subcellularLocation>
</comment>
<comment type="similarity">
    <text evidence="5">Belongs to the peptidase M36 family.</text>
</comment>
<accession>Q8NIH1</accession>
<protein>
    <recommendedName>
        <fullName>Extracellular metalloproteinase 5</fullName>
        <ecNumber>3.4.24.-</ecNumber>
    </recommendedName>
    <alternativeName>
        <fullName>Fungalysin MEP5</fullName>
    </alternativeName>
</protein>
<proteinExistence type="evidence at protein level"/>
<organism>
    <name type="scientific">Trichophyton rubrum</name>
    <name type="common">Athlete's foot fungus</name>
    <name type="synonym">Epidermophyton rubrum</name>
    <dbReference type="NCBI Taxonomy" id="5551"/>
    <lineage>
        <taxon>Eukaryota</taxon>
        <taxon>Fungi</taxon>
        <taxon>Dikarya</taxon>
        <taxon>Ascomycota</taxon>
        <taxon>Pezizomycotina</taxon>
        <taxon>Eurotiomycetes</taxon>
        <taxon>Eurotiomycetidae</taxon>
        <taxon>Onygenales</taxon>
        <taxon>Arthrodermataceae</taxon>
        <taxon>Trichophyton</taxon>
    </lineage>
</organism>